<gene>
    <name evidence="8" type="primary">hs6st1b</name>
</gene>
<organism>
    <name type="scientific">Danio rerio</name>
    <name type="common">Zebrafish</name>
    <name type="synonym">Brachydanio rerio</name>
    <dbReference type="NCBI Taxonomy" id="7955"/>
    <lineage>
        <taxon>Eukaryota</taxon>
        <taxon>Metazoa</taxon>
        <taxon>Chordata</taxon>
        <taxon>Craniata</taxon>
        <taxon>Vertebrata</taxon>
        <taxon>Euteleostomi</taxon>
        <taxon>Actinopterygii</taxon>
        <taxon>Neopterygii</taxon>
        <taxon>Teleostei</taxon>
        <taxon>Ostariophysi</taxon>
        <taxon>Cypriniformes</taxon>
        <taxon>Danionidae</taxon>
        <taxon>Danioninae</taxon>
        <taxon>Danio</taxon>
    </lineage>
</organism>
<comment type="function">
    <text evidence="3">6-O-sulfation enzyme which catalyzes the transfer of sulfate from 3'-phosphoadenosine 5'-phosphosulfate (PAPS) to position 6 of the N-sulfoglucosamine residue (GlcNS) of heparan sulfate.</text>
</comment>
<comment type="catalytic activity">
    <reaction evidence="3">
        <text>alpha-D-glucosaminyl-[heparan sulfate](n) + 3'-phosphoadenylyl sulfate = 6-sulfo-alpha-D-glucosaminyl-[heparan sulfate](n) + adenosine 3',5'-bisphosphate + H(+)</text>
        <dbReference type="Rhea" id="RHEA:56604"/>
        <dbReference type="Rhea" id="RHEA-COMP:9830"/>
        <dbReference type="Rhea" id="RHEA-COMP:14621"/>
        <dbReference type="ChEBI" id="CHEBI:15378"/>
        <dbReference type="ChEBI" id="CHEBI:58339"/>
        <dbReference type="ChEBI" id="CHEBI:58343"/>
        <dbReference type="ChEBI" id="CHEBI:58388"/>
        <dbReference type="ChEBI" id="CHEBI:140604"/>
    </reaction>
</comment>
<comment type="subcellular location">
    <subcellularLocation>
        <location evidence="4">Membrane</location>
        <topology evidence="4">Single-pass type II membrane protein</topology>
    </subcellularLocation>
</comment>
<comment type="tissue specificity">
    <text evidence="5">During early somitogenesis, first expressed in floor plate and somites. During mid-somitogenesis, expressed strongly in somites and more weakly in eye and hindbrain. During late somitogenesis, expressed in eye, hindbrain and posterior somites. At 24 hours post-fertilization (hpf), expressed in lens, forebrain, hindbrain, otic vesicle, anterior spinal cord neurons and posterior somites. At 36 hpf, expressed in the retinal ciliary marginal zone, brain, pancreas and weakly in pectoral fin. At 48 hpf, expressed in the retinal ciliary marginal zone, retinal ganglion cells, rhombomeres, otic vesicle and weakly in pectoral fin.</text>
</comment>
<comment type="developmental stage">
    <text evidence="5">Expressed both maternally and zygotically. Expression is lost before gastrulation and begins again during early somitogenesis.</text>
</comment>
<comment type="similarity">
    <text evidence="4">Belongs to the sulfotransferase 6 family.</text>
</comment>
<sequence>MNDTERNMVERTSKFLLIVVGSVFFMLILYQYVAPGVINFGSPHGYLLGEEDMTIFPTPDPHYVKKYYFPIKDLERKIDFEIKGEDVIVFLHIQKTGGTTFGRHLVQNVRLELPCDCRPGQKKCTCYRPNRKETWLFSRFSTGWSCGLHADWTELTNCVPGVLNKRESKSKKMRKFYYITLLRDPVSRYLSEWRHVQRGATWKTSLHMCDGRTPTPEELPPCYEGTDWSGCTLQQFMDCPYNLANNRQVRMLADLSLVGCYNLSTVPEKRRSQLLLESAKKNLRDMAFYGLTEFQRKTQYLFERTFHLKFIRPFMQYNSTRAAGVDLDNDTIQRIEELNDLDMKLYDYAKDLFQQRYQYKHMLDRREQRLLRGHASFHSPFREDGAGGEGTARLPTEDYMNHIINGW</sequence>
<reference evidence="6 7" key="1">
    <citation type="journal article" date="2006" name="Dev. Dyn.">
        <title>Combinatorial expression patterns of heparan sulfate sulfotransferases in zebrafish: II. The 6-O-sulfotransferase family.</title>
        <authorList>
            <person name="Cadwallader A.B."/>
            <person name="Yost H.J."/>
        </authorList>
    </citation>
    <scope>NUCLEOTIDE SEQUENCE [MRNA]</scope>
    <scope>DEVELOPMENTAL STAGE</scope>
    <scope>TISSUE SPECIFICITY</scope>
</reference>
<evidence type="ECO:0000250" key="1">
    <source>
        <dbReference type="UniProtKB" id="A0MGZ7"/>
    </source>
</evidence>
<evidence type="ECO:0000250" key="2">
    <source>
        <dbReference type="UniProtKB" id="O60243"/>
    </source>
</evidence>
<evidence type="ECO:0000250" key="3">
    <source>
        <dbReference type="UniProtKB" id="Q91ZB4"/>
    </source>
</evidence>
<evidence type="ECO:0000255" key="4"/>
<evidence type="ECO:0000269" key="5">
    <source>
    </source>
</evidence>
<evidence type="ECO:0000305" key="6"/>
<evidence type="ECO:0000312" key="7">
    <source>
        <dbReference type="EMBL" id="ABH11456.1"/>
    </source>
</evidence>
<evidence type="ECO:0000312" key="8">
    <source>
        <dbReference type="ZFIN" id="ZDB-GENE-070103-2"/>
    </source>
</evidence>
<proteinExistence type="evidence at transcript level"/>
<keyword id="KW-0325">Glycoprotein</keyword>
<keyword id="KW-0472">Membrane</keyword>
<keyword id="KW-1185">Reference proteome</keyword>
<keyword id="KW-0735">Signal-anchor</keyword>
<keyword id="KW-0808">Transferase</keyword>
<keyword id="KW-0812">Transmembrane</keyword>
<keyword id="KW-1133">Transmembrane helix</keyword>
<dbReference type="EC" id="2.8.2.-" evidence="3"/>
<dbReference type="EMBL" id="DQ812994">
    <property type="protein sequence ID" value="ABH11456.1"/>
    <property type="molecule type" value="mRNA"/>
</dbReference>
<dbReference type="RefSeq" id="NP_001073672.1">
    <property type="nucleotide sequence ID" value="NM_001080203.1"/>
</dbReference>
<dbReference type="SMR" id="A0MGZ5"/>
<dbReference type="FunCoup" id="A0MGZ5">
    <property type="interactions" value="1544"/>
</dbReference>
<dbReference type="STRING" id="7955.ENSDARP00000096556"/>
<dbReference type="GlyCosmos" id="A0MGZ5">
    <property type="glycosylation" value="3 sites, No reported glycans"/>
</dbReference>
<dbReference type="PaxDb" id="7955-ENSDARP00000096556"/>
<dbReference type="Ensembl" id="ENSDART00000105778">
    <property type="protein sequence ID" value="ENSDARP00000096556"/>
    <property type="gene ID" value="ENSDARG00000071501"/>
</dbReference>
<dbReference type="Ensembl" id="ENSDART00000180982">
    <property type="protein sequence ID" value="ENSDARP00000153923"/>
    <property type="gene ID" value="ENSDARG00000116688"/>
</dbReference>
<dbReference type="GeneID" id="791107"/>
<dbReference type="KEGG" id="dre:791107"/>
<dbReference type="AGR" id="ZFIN:ZDB-GENE-070103-2"/>
<dbReference type="CTD" id="791107"/>
<dbReference type="ZFIN" id="ZDB-GENE-070103-2">
    <property type="gene designation" value="hs6st1b"/>
</dbReference>
<dbReference type="eggNOG" id="KOG3955">
    <property type="taxonomic scope" value="Eukaryota"/>
</dbReference>
<dbReference type="HOGENOM" id="CLU_027877_1_0_1"/>
<dbReference type="InParanoid" id="A0MGZ5"/>
<dbReference type="OMA" id="KNHMQQN"/>
<dbReference type="OrthoDB" id="406981at2759"/>
<dbReference type="PhylomeDB" id="A0MGZ5"/>
<dbReference type="TreeFam" id="TF312835"/>
<dbReference type="PRO" id="PR:A0MGZ5"/>
<dbReference type="Proteomes" id="UP000000437">
    <property type="component" value="Alternate scaffold 24"/>
</dbReference>
<dbReference type="Proteomes" id="UP000000437">
    <property type="component" value="Chromosome 24"/>
</dbReference>
<dbReference type="Bgee" id="ENSDARG00000071501">
    <property type="expression patterns" value="Expressed in mature ovarian follicle and 22 other cell types or tissues"/>
</dbReference>
<dbReference type="GO" id="GO:0016020">
    <property type="term" value="C:membrane"/>
    <property type="evidence" value="ECO:0007669"/>
    <property type="project" value="UniProtKB-SubCell"/>
</dbReference>
<dbReference type="GO" id="GO:0017095">
    <property type="term" value="F:heparan sulfate 6-sulfotransferase activity"/>
    <property type="evidence" value="ECO:0000318"/>
    <property type="project" value="GO_Central"/>
</dbReference>
<dbReference type="FunFam" id="3.40.50.300:FF:000347">
    <property type="entry name" value="Heparan-sulfate 6-O-sulfotransferase"/>
    <property type="match status" value="1"/>
</dbReference>
<dbReference type="Gene3D" id="3.40.50.300">
    <property type="entry name" value="P-loop containing nucleotide triphosphate hydrolases"/>
    <property type="match status" value="1"/>
</dbReference>
<dbReference type="InterPro" id="IPR010635">
    <property type="entry name" value="Heparan_SO4-6-sulfoTrfase"/>
</dbReference>
<dbReference type="InterPro" id="IPR027417">
    <property type="entry name" value="P-loop_NTPase"/>
</dbReference>
<dbReference type="InterPro" id="IPR005331">
    <property type="entry name" value="Sulfotransferase"/>
</dbReference>
<dbReference type="PANTHER" id="PTHR12812">
    <property type="entry name" value="HEPARAN SULFATE 6-O-SULFOTRANSFERASE 3"/>
    <property type="match status" value="1"/>
</dbReference>
<dbReference type="PANTHER" id="PTHR12812:SF1">
    <property type="entry name" value="HEPARAN-SULFATE 6-O-SULFOTRANSFERASE 1"/>
    <property type="match status" value="1"/>
</dbReference>
<dbReference type="Pfam" id="PF03567">
    <property type="entry name" value="Sulfotransfer_2"/>
    <property type="match status" value="1"/>
</dbReference>
<dbReference type="SUPFAM" id="SSF52540">
    <property type="entry name" value="P-loop containing nucleoside triphosphate hydrolases"/>
    <property type="match status" value="1"/>
</dbReference>
<protein>
    <recommendedName>
        <fullName evidence="2">Heparan-sulfate 6-O-sulfotransferase 1-B</fullName>
        <shortName>HS 6-OST-1B</shortName>
        <ecNumber evidence="3">2.8.2.-</ecNumber>
    </recommendedName>
</protein>
<accession>A0MGZ5</accession>
<name>H6S1B_DANRE</name>
<feature type="chain" id="PRO_0000283819" description="Heparan-sulfate 6-O-sulfotransferase 1-B">
    <location>
        <begin position="1"/>
        <end position="407"/>
    </location>
</feature>
<feature type="topological domain" description="Cytoplasmic" evidence="4">
    <location>
        <begin position="8"/>
        <end position="14"/>
    </location>
</feature>
<feature type="transmembrane region" description="Helical; Signal-anchor for type II membrane protein" evidence="4">
    <location>
        <begin position="15"/>
        <end position="35"/>
    </location>
</feature>
<feature type="topological domain" description="Lumenal" evidence="4">
    <location>
        <begin position="36"/>
        <end position="407"/>
    </location>
</feature>
<feature type="active site" description="Proton acceptor" evidence="1">
    <location>
        <position position="149"/>
    </location>
</feature>
<feature type="binding site" evidence="1">
    <location>
        <begin position="92"/>
        <end position="100"/>
    </location>
    <ligand>
        <name>3'-phosphoadenylyl sulfate</name>
        <dbReference type="ChEBI" id="CHEBI:58339"/>
    </ligand>
</feature>
<feature type="binding site" evidence="1">
    <location>
        <begin position="122"/>
        <end position="123"/>
    </location>
    <ligand>
        <name>substrate</name>
    </ligand>
</feature>
<feature type="binding site" evidence="1">
    <location>
        <position position="139"/>
    </location>
    <ligand>
        <name>substrate</name>
    </ligand>
</feature>
<feature type="binding site" evidence="1">
    <location>
        <position position="144"/>
    </location>
    <ligand>
        <name>substrate</name>
    </ligand>
</feature>
<feature type="binding site" evidence="1">
    <location>
        <position position="149"/>
    </location>
    <ligand>
        <name>substrate</name>
    </ligand>
</feature>
<feature type="binding site" evidence="1">
    <location>
        <position position="183"/>
    </location>
    <ligand>
        <name>3'-phosphoadenylyl sulfate</name>
        <dbReference type="ChEBI" id="CHEBI:58339"/>
    </ligand>
</feature>
<feature type="binding site" evidence="1">
    <location>
        <position position="191"/>
    </location>
    <ligand>
        <name>3'-phosphoadenylyl sulfate</name>
        <dbReference type="ChEBI" id="CHEBI:58339"/>
    </ligand>
</feature>
<feature type="binding site" evidence="1">
    <location>
        <position position="195"/>
    </location>
    <ligand>
        <name>substrate</name>
    </ligand>
</feature>
<feature type="binding site" evidence="1">
    <location>
        <position position="202"/>
    </location>
    <ligand>
        <name>substrate</name>
    </ligand>
</feature>
<feature type="binding site" evidence="1">
    <location>
        <begin position="315"/>
        <end position="317"/>
    </location>
    <ligand>
        <name>3'-phosphoadenylyl sulfate</name>
        <dbReference type="ChEBI" id="CHEBI:58339"/>
    </ligand>
</feature>
<feature type="binding site" evidence="1">
    <location>
        <begin position="321"/>
        <end position="322"/>
    </location>
    <ligand>
        <name>3'-phosphoadenylyl sulfate</name>
        <dbReference type="ChEBI" id="CHEBI:58339"/>
    </ligand>
</feature>
<feature type="glycosylation site" description="N-linked (GlcNAc...) asparagine" evidence="4">
    <location>
        <position position="262"/>
    </location>
</feature>
<feature type="glycosylation site" description="N-linked (GlcNAc...) asparagine" evidence="4">
    <location>
        <position position="318"/>
    </location>
</feature>
<feature type="glycosylation site" description="N-linked (GlcNAc...) asparagine" evidence="4">
    <location>
        <position position="329"/>
    </location>
</feature>